<accession>Q2RZH4</accession>
<comment type="catalytic activity">
    <reaction evidence="1">
        <text>thymidine + ATP = dTMP + ADP + H(+)</text>
        <dbReference type="Rhea" id="RHEA:19129"/>
        <dbReference type="ChEBI" id="CHEBI:15378"/>
        <dbReference type="ChEBI" id="CHEBI:17748"/>
        <dbReference type="ChEBI" id="CHEBI:30616"/>
        <dbReference type="ChEBI" id="CHEBI:63528"/>
        <dbReference type="ChEBI" id="CHEBI:456216"/>
        <dbReference type="EC" id="2.7.1.21"/>
    </reaction>
</comment>
<comment type="subunit">
    <text evidence="1">Homotetramer.</text>
</comment>
<comment type="subcellular location">
    <subcellularLocation>
        <location evidence="1">Cytoplasm</location>
    </subcellularLocation>
</comment>
<comment type="similarity">
    <text evidence="1">Belongs to the thymidine kinase family.</text>
</comment>
<protein>
    <recommendedName>
        <fullName evidence="1">Thymidine kinase</fullName>
        <ecNumber evidence="1">2.7.1.21</ecNumber>
    </recommendedName>
</protein>
<keyword id="KW-0067">ATP-binding</keyword>
<keyword id="KW-0963">Cytoplasm</keyword>
<keyword id="KW-0237">DNA synthesis</keyword>
<keyword id="KW-0418">Kinase</keyword>
<keyword id="KW-0479">Metal-binding</keyword>
<keyword id="KW-0547">Nucleotide-binding</keyword>
<keyword id="KW-1185">Reference proteome</keyword>
<keyword id="KW-0808">Transferase</keyword>
<keyword id="KW-0862">Zinc</keyword>
<organism>
    <name type="scientific">Salinibacter ruber (strain DSM 13855 / M31)</name>
    <dbReference type="NCBI Taxonomy" id="309807"/>
    <lineage>
        <taxon>Bacteria</taxon>
        <taxon>Pseudomonadati</taxon>
        <taxon>Rhodothermota</taxon>
        <taxon>Rhodothermia</taxon>
        <taxon>Rhodothermales</taxon>
        <taxon>Salinibacteraceae</taxon>
        <taxon>Salinibacter</taxon>
    </lineage>
</organism>
<proteinExistence type="inferred from homology"/>
<gene>
    <name evidence="1" type="primary">tdk</name>
    <name type="ordered locus">SRU_2559</name>
</gene>
<feature type="chain" id="PRO_0000242802" description="Thymidine kinase">
    <location>
        <begin position="1"/>
        <end position="227"/>
    </location>
</feature>
<feature type="region of interest" description="Disordered" evidence="2">
    <location>
        <begin position="198"/>
        <end position="227"/>
    </location>
</feature>
<feature type="compositionally biased region" description="Low complexity" evidence="2">
    <location>
        <begin position="217"/>
        <end position="227"/>
    </location>
</feature>
<feature type="active site" description="Proton acceptor" evidence="1">
    <location>
        <position position="88"/>
    </location>
</feature>
<feature type="binding site" evidence="1">
    <location>
        <begin position="15"/>
        <end position="22"/>
    </location>
    <ligand>
        <name>ATP</name>
        <dbReference type="ChEBI" id="CHEBI:30616"/>
    </ligand>
</feature>
<feature type="binding site" evidence="1">
    <location>
        <begin position="87"/>
        <end position="90"/>
    </location>
    <ligand>
        <name>ATP</name>
        <dbReference type="ChEBI" id="CHEBI:30616"/>
    </ligand>
</feature>
<feature type="binding site" evidence="1">
    <location>
        <position position="144"/>
    </location>
    <ligand>
        <name>Zn(2+)</name>
        <dbReference type="ChEBI" id="CHEBI:29105"/>
    </ligand>
</feature>
<feature type="binding site" evidence="1">
    <location>
        <position position="147"/>
    </location>
    <ligand>
        <name>Zn(2+)</name>
        <dbReference type="ChEBI" id="CHEBI:29105"/>
    </ligand>
</feature>
<feature type="binding site" evidence="1">
    <location>
        <position position="176"/>
    </location>
    <ligand>
        <name>Zn(2+)</name>
        <dbReference type="ChEBI" id="CHEBI:29105"/>
    </ligand>
</feature>
<feature type="binding site" evidence="1">
    <location>
        <position position="179"/>
    </location>
    <ligand>
        <name>Zn(2+)</name>
        <dbReference type="ChEBI" id="CHEBI:29105"/>
    </ligand>
</feature>
<reference key="1">
    <citation type="journal article" date="2005" name="Proc. Natl. Acad. Sci. U.S.A.">
        <title>The genome of Salinibacter ruber: convergence and gene exchange among hyperhalophilic bacteria and archaea.</title>
        <authorList>
            <person name="Mongodin E.F."/>
            <person name="Nelson K.E."/>
            <person name="Daugherty S."/>
            <person name="DeBoy R.T."/>
            <person name="Wister J."/>
            <person name="Khouri H."/>
            <person name="Weidman J."/>
            <person name="Walsh D.A."/>
            <person name="Papke R.T."/>
            <person name="Sanchez Perez G."/>
            <person name="Sharma A.K."/>
            <person name="Nesbo C.L."/>
            <person name="MacLeod D."/>
            <person name="Bapteste E."/>
            <person name="Doolittle W.F."/>
            <person name="Charlebois R.L."/>
            <person name="Legault B."/>
            <person name="Rodriguez-Valera F."/>
        </authorList>
    </citation>
    <scope>NUCLEOTIDE SEQUENCE [LARGE SCALE GENOMIC DNA]</scope>
    <source>
        <strain>DSM 13855 / CECT 5946 / M31</strain>
    </source>
</reference>
<name>KITH_SALRD</name>
<sequence>MDRDRTTGWMEVICGSMFSGKTEELIRRLRRARIARQHTRVFKPALDERYSEDEVVSHNENSVTTTPVEAPPQIQELVQEADVVGIDEAQFFDDDLVPTCQALAEDGHRVIVVGLDTDYRAEPFDPMPQLMAVAEHVTKLHAVCVVCGAPANHSQRIVPGEDRVLVGATEAYEPRCRACFEPEPVTVTRPRPHTEALRAVATDDADASTNEADPEAADAASADGTAA</sequence>
<dbReference type="EC" id="2.7.1.21" evidence="1"/>
<dbReference type="EMBL" id="CP000159">
    <property type="protein sequence ID" value="ABC45345.1"/>
    <property type="molecule type" value="Genomic_DNA"/>
</dbReference>
<dbReference type="RefSeq" id="YP_446657.1">
    <property type="nucleotide sequence ID" value="NC_007677.1"/>
</dbReference>
<dbReference type="SMR" id="Q2RZH4"/>
<dbReference type="STRING" id="309807.SRU_2559"/>
<dbReference type="EnsemblBacteria" id="ABC45345">
    <property type="protein sequence ID" value="ABC45345"/>
    <property type="gene ID" value="SRU_2559"/>
</dbReference>
<dbReference type="KEGG" id="sru:SRU_2559"/>
<dbReference type="PATRIC" id="fig|309807.25.peg.2666"/>
<dbReference type="eggNOG" id="COG1435">
    <property type="taxonomic scope" value="Bacteria"/>
</dbReference>
<dbReference type="HOGENOM" id="CLU_064400_3_0_10"/>
<dbReference type="OrthoDB" id="9781579at2"/>
<dbReference type="Proteomes" id="UP000008674">
    <property type="component" value="Chromosome"/>
</dbReference>
<dbReference type="GO" id="GO:0005829">
    <property type="term" value="C:cytosol"/>
    <property type="evidence" value="ECO:0007669"/>
    <property type="project" value="TreeGrafter"/>
</dbReference>
<dbReference type="GO" id="GO:0005524">
    <property type="term" value="F:ATP binding"/>
    <property type="evidence" value="ECO:0007669"/>
    <property type="project" value="UniProtKB-UniRule"/>
</dbReference>
<dbReference type="GO" id="GO:0004797">
    <property type="term" value="F:thymidine kinase activity"/>
    <property type="evidence" value="ECO:0007669"/>
    <property type="project" value="UniProtKB-UniRule"/>
</dbReference>
<dbReference type="GO" id="GO:0008270">
    <property type="term" value="F:zinc ion binding"/>
    <property type="evidence" value="ECO:0007669"/>
    <property type="project" value="UniProtKB-UniRule"/>
</dbReference>
<dbReference type="GO" id="GO:0071897">
    <property type="term" value="P:DNA biosynthetic process"/>
    <property type="evidence" value="ECO:0007669"/>
    <property type="project" value="UniProtKB-KW"/>
</dbReference>
<dbReference type="GO" id="GO:0046104">
    <property type="term" value="P:thymidine metabolic process"/>
    <property type="evidence" value="ECO:0007669"/>
    <property type="project" value="TreeGrafter"/>
</dbReference>
<dbReference type="FunFam" id="3.40.50.300:FF:000384">
    <property type="entry name" value="Thymidine kinase"/>
    <property type="match status" value="1"/>
</dbReference>
<dbReference type="Gene3D" id="3.30.60.20">
    <property type="match status" value="1"/>
</dbReference>
<dbReference type="Gene3D" id="3.40.50.300">
    <property type="entry name" value="P-loop containing nucleotide triphosphate hydrolases"/>
    <property type="match status" value="1"/>
</dbReference>
<dbReference type="HAMAP" id="MF_00124">
    <property type="entry name" value="Thymidine_kinase"/>
    <property type="match status" value="1"/>
</dbReference>
<dbReference type="InterPro" id="IPR027417">
    <property type="entry name" value="P-loop_NTPase"/>
</dbReference>
<dbReference type="InterPro" id="IPR001267">
    <property type="entry name" value="Thymidine_kinase"/>
</dbReference>
<dbReference type="InterPro" id="IPR020633">
    <property type="entry name" value="Thymidine_kinase_CS"/>
</dbReference>
<dbReference type="NCBIfam" id="NF003296">
    <property type="entry name" value="PRK04296.1-1"/>
    <property type="match status" value="1"/>
</dbReference>
<dbReference type="PANTHER" id="PTHR11441">
    <property type="entry name" value="THYMIDINE KINASE"/>
    <property type="match status" value="1"/>
</dbReference>
<dbReference type="PANTHER" id="PTHR11441:SF0">
    <property type="entry name" value="THYMIDINE KINASE, CYTOSOLIC"/>
    <property type="match status" value="1"/>
</dbReference>
<dbReference type="Pfam" id="PF00265">
    <property type="entry name" value="TK"/>
    <property type="match status" value="1"/>
</dbReference>
<dbReference type="SUPFAM" id="SSF57716">
    <property type="entry name" value="Glucocorticoid receptor-like (DNA-binding domain)"/>
    <property type="match status" value="1"/>
</dbReference>
<dbReference type="SUPFAM" id="SSF52540">
    <property type="entry name" value="P-loop containing nucleoside triphosphate hydrolases"/>
    <property type="match status" value="1"/>
</dbReference>
<dbReference type="PROSITE" id="PS00603">
    <property type="entry name" value="TK_CELLULAR_TYPE"/>
    <property type="match status" value="1"/>
</dbReference>
<evidence type="ECO:0000255" key="1">
    <source>
        <dbReference type="HAMAP-Rule" id="MF_00124"/>
    </source>
</evidence>
<evidence type="ECO:0000256" key="2">
    <source>
        <dbReference type="SAM" id="MobiDB-lite"/>
    </source>
</evidence>